<name>RPOC2_CRUWA</name>
<organism>
    <name type="scientific">Crucihimalaya wallichii</name>
    <name type="common">Rock-cress</name>
    <name type="synonym">Arabidopsis campestris</name>
    <dbReference type="NCBI Taxonomy" id="78192"/>
    <lineage>
        <taxon>Eukaryota</taxon>
        <taxon>Viridiplantae</taxon>
        <taxon>Streptophyta</taxon>
        <taxon>Embryophyta</taxon>
        <taxon>Tracheophyta</taxon>
        <taxon>Spermatophyta</taxon>
        <taxon>Magnoliopsida</taxon>
        <taxon>eudicotyledons</taxon>
        <taxon>Gunneridae</taxon>
        <taxon>Pentapetalae</taxon>
        <taxon>rosids</taxon>
        <taxon>malvids</taxon>
        <taxon>Brassicales</taxon>
        <taxon>Brassicaceae</taxon>
        <taxon>Crucihimalayeae</taxon>
        <taxon>Crucihimalaya</taxon>
    </lineage>
</organism>
<proteinExistence type="inferred from homology"/>
<geneLocation type="chloroplast"/>
<evidence type="ECO:0000255" key="1">
    <source>
        <dbReference type="HAMAP-Rule" id="MF_01324"/>
    </source>
</evidence>
<feature type="chain" id="PRO_0000353554" description="DNA-directed RNA polymerase subunit beta''">
    <location>
        <begin position="1"/>
        <end position="1379"/>
    </location>
</feature>
<feature type="binding site" evidence="1">
    <location>
        <position position="220"/>
    </location>
    <ligand>
        <name>Zn(2+)</name>
        <dbReference type="ChEBI" id="CHEBI:29105"/>
    </ligand>
</feature>
<feature type="binding site" evidence="1">
    <location>
        <position position="293"/>
    </location>
    <ligand>
        <name>Zn(2+)</name>
        <dbReference type="ChEBI" id="CHEBI:29105"/>
    </ligand>
</feature>
<feature type="binding site" evidence="1">
    <location>
        <position position="300"/>
    </location>
    <ligand>
        <name>Zn(2+)</name>
        <dbReference type="ChEBI" id="CHEBI:29105"/>
    </ligand>
</feature>
<feature type="binding site" evidence="1">
    <location>
        <position position="303"/>
    </location>
    <ligand>
        <name>Zn(2+)</name>
        <dbReference type="ChEBI" id="CHEBI:29105"/>
    </ligand>
</feature>
<sequence>MAERANLVFHNKVIDGTAIKRLISRLIDHFGMAYTSHILDQVKTLGFQQATATSISLGIDDLLTIPSKGWLVQDAEQQSWILEKHHHYGNVHAVEKLRQSIEIWYATSEYLRQEMNPNFRMTDPFNPVHMMSFSGARGNASQVHQLVGMRGLMSDPQGQMIDLPIQSNLREGLSLTEYIISCYGARKGVVDTAVRTSDAGYLTRRLVEVVQHIVVRRTDCGTIRGISVSPRNKNRMMSERIFIQTLIGRVLADDIYIGSRCVAFRNQDLGIGLVNGLITSGTQSISIRTPFTCRSTSWICRLCYGRSPTHGDLVELGEAVGIIAGQSIGEPGTQLTLRTFHTGGVFTGGTAEHVRAPYNGKIKFNEDLVHPTRTRHGHPAFLCYIDLSVIIESEDIIHSVTIPPKSFILVQNDQYVESEQVIAEIREGTYTFHFKERVRKYIYSDSEGEMHWSTDVSHAPEFTYSNVHLLPKTSHLWILSGSSCGSSLILFSIHKDQDQMNIPFLSVERKSISSLSVNNDQVSQKFLSSDFADQKKSGIPDYSELNGNLGTSHYNFIYSAIFHKNSDLLAKRRRNRFLIPFQSIQEQEKEFIPHSGISIEIPINGIFRRNSIFAFFDDPRYRRKSSGILKYGTLKADSIIQKEDMIEYRGVQKFKTKYEMKVDRFFFIPEEVHILPESSDIMVQNYSIIGVNTRLTLNIRSQVGGLIRVERKKKRIELKIFSGDIHFPDKTDKISRHSGILLPPGKGKTNSKESKKFKNWIYVQRITPTKKKFFVLVRPVATYEIADSINLATLFPQDLFREKDNIQLRVFNYILYGNGKPTRGISHTSIQLVRTCLVLNWDQDNKNSSLEEVRAFFVEVSTKGLIRDFIRIGLVKSHISYIRKRNNSPDSGLISADHMNPFYSISPKAGILQQSLRQNHGTIRMFLNRNKESQSLLILSSSNCFRMGPFNHVKYHNVINESIKKNPLITIKNSSGPLGTAAQISNFYSFLPLLTYNKISVIKYLQLDNLKDIFQVINSYLIDENGRIFNLDPYSNVVLNPFKLNWYFLHKNYHHNYCEETSTIISLGQFFCENLCIAKKEPQLKSGQVLIVQRDSVVIRAAKPYLATPGAKVHGHYREILYEGDTLVTFIYEKSRSGDITQGLPKVEQVLEVRSIDSISLNLEKRIKGWNKCITRILGIPWGFLIGAELTIVQSRISLVNKIQKVYRSQGVQIHNRHIEIIVRQITSKVLVSEEGMSNVFLPGELIGLLRAERTGRALEEAICYRAVLLGITRASLNTQSFISEASFQETARVLAKAALRGRIDWLKGLKENVVLGGVIPAGTGFNKGLVHCSRQHTNILLEKKTKNFSLFEGDMRDILFYHREFCDSSISKSDFSRI</sequence>
<protein>
    <recommendedName>
        <fullName evidence="1">DNA-directed RNA polymerase subunit beta''</fullName>
        <ecNumber evidence="1">2.7.7.6</ecNumber>
    </recommendedName>
    <alternativeName>
        <fullName evidence="1">PEP</fullName>
    </alternativeName>
    <alternativeName>
        <fullName evidence="1">Plastid-encoded RNA polymerase subunit beta''</fullName>
        <shortName evidence="1">RNA polymerase subunit beta''</shortName>
    </alternativeName>
</protein>
<reference key="1">
    <citation type="submission" date="2007-03" db="EMBL/GenBank/DDBJ databases">
        <title>Sequencing analysis of Crucihimalaya wallichii chloroplast DNA.</title>
        <authorList>
            <person name="Hosouchi T."/>
            <person name="Tsuruoka H."/>
            <person name="Kotani H."/>
        </authorList>
    </citation>
    <scope>NUCLEOTIDE SEQUENCE [LARGE SCALE GENOMIC DNA]</scope>
</reference>
<keyword id="KW-0150">Chloroplast</keyword>
<keyword id="KW-0240">DNA-directed RNA polymerase</keyword>
<keyword id="KW-0479">Metal-binding</keyword>
<keyword id="KW-0548">Nucleotidyltransferase</keyword>
<keyword id="KW-0934">Plastid</keyword>
<keyword id="KW-0804">Transcription</keyword>
<keyword id="KW-0808">Transferase</keyword>
<keyword id="KW-0862">Zinc</keyword>
<gene>
    <name evidence="1" type="primary">rpoC2</name>
</gene>
<dbReference type="EC" id="2.7.7.6" evidence="1"/>
<dbReference type="EMBL" id="AP009372">
    <property type="protein sequence ID" value="BAF50276.1"/>
    <property type="molecule type" value="Genomic_DNA"/>
</dbReference>
<dbReference type="RefSeq" id="YP_001123452.1">
    <property type="nucleotide sequence ID" value="NC_009271.1"/>
</dbReference>
<dbReference type="SMR" id="A4QKS1"/>
<dbReference type="GeneID" id="4962749"/>
<dbReference type="GO" id="GO:0009507">
    <property type="term" value="C:chloroplast"/>
    <property type="evidence" value="ECO:0007669"/>
    <property type="project" value="UniProtKB-SubCell"/>
</dbReference>
<dbReference type="GO" id="GO:0000428">
    <property type="term" value="C:DNA-directed RNA polymerase complex"/>
    <property type="evidence" value="ECO:0007669"/>
    <property type="project" value="UniProtKB-KW"/>
</dbReference>
<dbReference type="GO" id="GO:0005739">
    <property type="term" value="C:mitochondrion"/>
    <property type="evidence" value="ECO:0007669"/>
    <property type="project" value="GOC"/>
</dbReference>
<dbReference type="GO" id="GO:0003677">
    <property type="term" value="F:DNA binding"/>
    <property type="evidence" value="ECO:0007669"/>
    <property type="project" value="UniProtKB-UniRule"/>
</dbReference>
<dbReference type="GO" id="GO:0003899">
    <property type="term" value="F:DNA-directed RNA polymerase activity"/>
    <property type="evidence" value="ECO:0007669"/>
    <property type="project" value="UniProtKB-UniRule"/>
</dbReference>
<dbReference type="GO" id="GO:0008270">
    <property type="term" value="F:zinc ion binding"/>
    <property type="evidence" value="ECO:0007669"/>
    <property type="project" value="UniProtKB-UniRule"/>
</dbReference>
<dbReference type="GO" id="GO:0006351">
    <property type="term" value="P:DNA-templated transcription"/>
    <property type="evidence" value="ECO:0007669"/>
    <property type="project" value="UniProtKB-UniRule"/>
</dbReference>
<dbReference type="CDD" id="cd02655">
    <property type="entry name" value="RNAP_beta'_C"/>
    <property type="match status" value="1"/>
</dbReference>
<dbReference type="FunFam" id="1.10.132.30:FF:000002">
    <property type="entry name" value="DNA-directed RNA polymerase subunit beta"/>
    <property type="match status" value="1"/>
</dbReference>
<dbReference type="FunFam" id="1.10.1790.20:FF:000002">
    <property type="entry name" value="DNA-directed RNA polymerase subunit beta"/>
    <property type="match status" value="1"/>
</dbReference>
<dbReference type="FunFam" id="1.10.274.100:FF:000011">
    <property type="entry name" value="DNA-directed RNA polymerase subunit beta"/>
    <property type="match status" value="1"/>
</dbReference>
<dbReference type="Gene3D" id="1.10.132.30">
    <property type="match status" value="1"/>
</dbReference>
<dbReference type="Gene3D" id="1.10.150.390">
    <property type="match status" value="1"/>
</dbReference>
<dbReference type="Gene3D" id="1.10.1790.20">
    <property type="match status" value="1"/>
</dbReference>
<dbReference type="Gene3D" id="1.10.274.100">
    <property type="entry name" value="RNA polymerase Rpb1, domain 3"/>
    <property type="match status" value="1"/>
</dbReference>
<dbReference type="HAMAP" id="MF_01324">
    <property type="entry name" value="RNApol_bact_RpoC2"/>
    <property type="match status" value="1"/>
</dbReference>
<dbReference type="InterPro" id="IPR012756">
    <property type="entry name" value="DNA-dir_RpoC2_beta_pp"/>
</dbReference>
<dbReference type="InterPro" id="IPR050254">
    <property type="entry name" value="RNA_pol_beta''_euk"/>
</dbReference>
<dbReference type="InterPro" id="IPR042102">
    <property type="entry name" value="RNA_pol_Rpb1_3_sf"/>
</dbReference>
<dbReference type="InterPro" id="IPR007083">
    <property type="entry name" value="RNA_pol_Rpb1_4"/>
</dbReference>
<dbReference type="InterPro" id="IPR007081">
    <property type="entry name" value="RNA_pol_Rpb1_5"/>
</dbReference>
<dbReference type="InterPro" id="IPR038120">
    <property type="entry name" value="Rpb1_funnel_sf"/>
</dbReference>
<dbReference type="NCBIfam" id="TIGR02388">
    <property type="entry name" value="rpoC2_cyan"/>
    <property type="match status" value="1"/>
</dbReference>
<dbReference type="PANTHER" id="PTHR34995">
    <property type="entry name" value="DNA-DIRECTED RNA POLYMERASE SUBUNIT BETA"/>
    <property type="match status" value="1"/>
</dbReference>
<dbReference type="PANTHER" id="PTHR34995:SF1">
    <property type="entry name" value="DNA-DIRECTED RNA POLYMERASE SUBUNIT BETA"/>
    <property type="match status" value="1"/>
</dbReference>
<dbReference type="Pfam" id="PF05000">
    <property type="entry name" value="RNA_pol_Rpb1_4"/>
    <property type="match status" value="1"/>
</dbReference>
<dbReference type="Pfam" id="PF04998">
    <property type="entry name" value="RNA_pol_Rpb1_5"/>
    <property type="match status" value="2"/>
</dbReference>
<dbReference type="SUPFAM" id="SSF64484">
    <property type="entry name" value="beta and beta-prime subunits of DNA dependent RNA-polymerase"/>
    <property type="match status" value="1"/>
</dbReference>
<comment type="function">
    <text evidence="1">DNA-dependent RNA polymerase catalyzes the transcription of DNA into RNA using the four ribonucleoside triphosphates as substrates.</text>
</comment>
<comment type="catalytic activity">
    <reaction evidence="1">
        <text>RNA(n) + a ribonucleoside 5'-triphosphate = RNA(n+1) + diphosphate</text>
        <dbReference type="Rhea" id="RHEA:21248"/>
        <dbReference type="Rhea" id="RHEA-COMP:14527"/>
        <dbReference type="Rhea" id="RHEA-COMP:17342"/>
        <dbReference type="ChEBI" id="CHEBI:33019"/>
        <dbReference type="ChEBI" id="CHEBI:61557"/>
        <dbReference type="ChEBI" id="CHEBI:140395"/>
        <dbReference type="EC" id="2.7.7.6"/>
    </reaction>
</comment>
<comment type="cofactor">
    <cofactor evidence="1">
        <name>Zn(2+)</name>
        <dbReference type="ChEBI" id="CHEBI:29105"/>
    </cofactor>
    <text evidence="1">Binds 1 Zn(2+) ion per subunit.</text>
</comment>
<comment type="subunit">
    <text evidence="1">In plastids the minimal PEP RNA polymerase catalytic core is composed of four subunits: alpha, beta, beta', and beta''. When a (nuclear-encoded) sigma factor is associated with the core the holoenzyme is formed, which can initiate transcription.</text>
</comment>
<comment type="subcellular location">
    <subcellularLocation>
        <location evidence="1">Plastid</location>
        <location evidence="1">Chloroplast</location>
    </subcellularLocation>
</comment>
<comment type="similarity">
    <text evidence="1">Belongs to the RNA polymerase beta' chain family. RpoC2 subfamily.</text>
</comment>
<accession>A4QKS1</accession>